<comment type="function">
    <text evidence="5">Seed storage protein. Accumulates during seed development and is hydrolyzed after germination to provide a carbon and nitrogen source for the developing seedling.</text>
</comment>
<comment type="subunit">
    <text evidence="9">Component of globulins complexes which accumulate in seeds.</text>
</comment>
<comment type="developmental stage">
    <text evidence="5">Increased expression during seed filling, with a maximum between 33 and 38 days after anthesis.</text>
</comment>
<comment type="allergen">
    <text evidence="4">Causes an allergic reaction in human. Lup an 1 is the major lupin allergen.</text>
</comment>
<comment type="miscellaneous">
    <text evidence="10">The variability of the residues taking part of IgE-binding epitopes might be responsible of the difference in cross-reactivity among legumes.</text>
</comment>
<comment type="similarity">
    <text evidence="8">Belongs to the 7S seed storage protein family.</text>
</comment>
<keyword id="KW-0020">Allergen</keyword>
<keyword id="KW-0325">Glycoprotein</keyword>
<keyword id="KW-0708">Seed storage protein</keyword>
<keyword id="KW-0732">Signal</keyword>
<keyword id="KW-0758">Storage protein</keyword>
<evidence type="ECO:0000255" key="1"/>
<evidence type="ECO:0000255" key="2">
    <source>
        <dbReference type="PROSITE-ProRule" id="PRU00498"/>
    </source>
</evidence>
<evidence type="ECO:0000256" key="3">
    <source>
        <dbReference type="SAM" id="MobiDB-lite"/>
    </source>
</evidence>
<evidence type="ECO:0000269" key="4">
    <source>
    </source>
</evidence>
<evidence type="ECO:0000269" key="5">
    <source>
    </source>
</evidence>
<evidence type="ECO:0000303" key="6">
    <source>
    </source>
</evidence>
<evidence type="ECO:0000303" key="7">
    <source>
    </source>
</evidence>
<evidence type="ECO:0000305" key="8"/>
<evidence type="ECO:0000305" key="9">
    <source>
    </source>
</evidence>
<evidence type="ECO:0000305" key="10">
    <source ref="4"/>
</evidence>
<gene>
    <name evidence="7" type="primary">BETA3</name>
</gene>
<organism>
    <name type="scientific">Lupinus angustifolius</name>
    <name type="common">Narrow-leaved blue lupine</name>
    <dbReference type="NCBI Taxonomy" id="3871"/>
    <lineage>
        <taxon>Eukaryota</taxon>
        <taxon>Viridiplantae</taxon>
        <taxon>Streptophyta</taxon>
        <taxon>Embryophyta</taxon>
        <taxon>Tracheophyta</taxon>
        <taxon>Spermatophyta</taxon>
        <taxon>Magnoliopsida</taxon>
        <taxon>eudicotyledons</taxon>
        <taxon>Gunneridae</taxon>
        <taxon>Pentapetalae</taxon>
        <taxon>rosids</taxon>
        <taxon>fabids</taxon>
        <taxon>Fabales</taxon>
        <taxon>Fabaceae</taxon>
        <taxon>Papilionoideae</taxon>
        <taxon>50 kb inversion clade</taxon>
        <taxon>genistoids sensu lato</taxon>
        <taxon>core genistoids</taxon>
        <taxon>Genisteae</taxon>
        <taxon>Lupinus</taxon>
    </lineage>
</organism>
<accession>F5B8W1</accession>
<sequence length="580" mass="68180">MAKMRVRFPTLVLLLGIVFLMAVSIGIAYGEKNVLKNHERPQEREQEERDPRQQPRPHHQEEQEREHRRESEESQEEEREQRREPRREREQEQQPQHGRREEEEEWQPRRQRPQSRREEREQEQGSSSSSRRQSGYERREQREEREQEQEQGSRSDSRRQRNPYYFSSERFQTLYRNRNGQIRVLERFDQRTNRLENLQNYRIVEFQSKPNTLILPKHSDADYILVVLNGSATITIVNPDKRQSYNLENGDALRLPAGTTSYILNPDDNQNLRVVKLAIPINNPGNFYDFYPSSSKDQQSYFSGFSKNTLEATFNTRYEEIQSILLGNEDEQEDDEQWHGQEQSHQDEGVIVRVSKEQVQELRKYAQSSSRKGKPYESGPFNLRSNKPIYSNKFGNFYEITPDRNPQAQDLDISLTFIEINEGALLLPHYNSKAIFVVVVDEGEGNYELVGIRDQQRQQDEQEVRRYSARLSEGDIFVIPAGHPISINASSNLRLLGFGINADENQRNFLAGSEDNVIRQLDREVKGLIFPGSAEDVERLIKNQQQSYFANAQPQQQQQREREGRHGRRGHISSILSTLY</sequence>
<feature type="signal peptide" evidence="1">
    <location>
        <begin position="1"/>
        <end position="30"/>
    </location>
</feature>
<feature type="chain" id="PRO_0000435265" description="Conglutin beta 3" evidence="1">
    <location>
        <begin position="31"/>
        <end position="580"/>
    </location>
</feature>
<feature type="domain" description="Cupin type-1 1" evidence="1">
    <location>
        <begin position="164"/>
        <end position="322"/>
    </location>
</feature>
<feature type="domain" description="Cupin type-1 2" evidence="1">
    <location>
        <begin position="381"/>
        <end position="538"/>
    </location>
</feature>
<feature type="region of interest" description="Disordered" evidence="3">
    <location>
        <begin position="37"/>
        <end position="165"/>
    </location>
</feature>
<feature type="region of interest" description="Disordered" evidence="3">
    <location>
        <begin position="549"/>
        <end position="569"/>
    </location>
</feature>
<feature type="compositionally biased region" description="Basic and acidic residues" evidence="3">
    <location>
        <begin position="37"/>
        <end position="72"/>
    </location>
</feature>
<feature type="compositionally biased region" description="Basic and acidic residues" evidence="3">
    <location>
        <begin position="79"/>
        <end position="92"/>
    </location>
</feature>
<feature type="compositionally biased region" description="Low complexity" evidence="3">
    <location>
        <begin position="124"/>
        <end position="133"/>
    </location>
</feature>
<feature type="compositionally biased region" description="Basic and acidic residues" evidence="3">
    <location>
        <begin position="134"/>
        <end position="145"/>
    </location>
</feature>
<feature type="glycosylation site" description="N-linked (GlcNAc...) asparagine" evidence="2">
    <location>
        <position position="229"/>
    </location>
</feature>
<feature type="glycosylation site" description="N-linked (GlcNAc...) asparagine" evidence="2">
    <location>
        <position position="488"/>
    </location>
</feature>
<reference key="1">
    <citation type="journal article" date="2011" name="BMC Plant Biol.">
        <title>Identification and characterisation of seed storage protein transcripts from Lupinus angustifolius.</title>
        <authorList>
            <person name="Foley R.C."/>
            <person name="Gao L.-L."/>
            <person name="Spriggs A."/>
            <person name="Soo L.Y.C."/>
            <person name="Goggin D.E."/>
            <person name="Smith P.M.C."/>
            <person name="Atkins C.A."/>
            <person name="Singh K.B."/>
        </authorList>
    </citation>
    <scope>NUCLEOTIDE SEQUENCE [MRNA]</scope>
    <scope>FUNCTION</scope>
    <scope>DEVELOPMENTAL STAGE</scope>
    <source>
        <strain>cv. Tanjil</strain>
        <tissue>Seed</tissue>
    </source>
</reference>
<reference key="2">
    <citation type="journal article" date="2008" name="J. Agric. Food Chem.">
        <title>Proteomic analysis of lupin seed proteins to identify conglutin Beta as an allergen, Lup an 1.</title>
        <authorList>
            <person name="Goggin D.E."/>
            <person name="Mir G."/>
            <person name="Smith W.B."/>
            <person name="Stuckey M."/>
            <person name="Smith P.M."/>
        </authorList>
    </citation>
    <scope>ALLERGEN</scope>
</reference>
<reference key="3">
    <citation type="journal article" date="2012" name="J. Agric. Food Chem.">
        <title>Release of flavonoids from lupin globulin proteins during digestion in a model system.</title>
        <authorList>
            <person name="Czubinski J."/>
            <person name="Dwiecki K."/>
            <person name="Siger A."/>
            <person name="Kachlicki P."/>
            <person name="Neunert G."/>
            <person name="Lampart-Szczapa E."/>
            <person name="Nogala-Kalucka M."/>
        </authorList>
    </citation>
    <scope>SUBUNIT</scope>
    <source>
        <strain>cv. Zeus</strain>
    </source>
</reference>
<reference key="4">
    <citation type="book" date="2015" name="Bioinformatics and Biomedical Engineering, LNCS 9043">
        <title>Lupin allergy: Uncovering structural features and epitopes of b-conglutin proteins in Lupinus angustifolius L. with a focus on cross-allergenic reactivity to peanut and other legumes.</title>
        <editorList>
            <person name="Ortuno F."/>
            <person name="Rojas I."/>
        </editorList>
        <authorList>
            <person name="Jimenez-Lopez J.C."/>
            <person name="Lima-Cabello E."/>
            <person name="Melser S."/>
            <person name="Foley R.C."/>
            <person name="Singh K.B."/>
        </authorList>
    </citation>
    <scope>3D-STRUCTURE MODELING</scope>
</reference>
<name>CONB3_LUPAN</name>
<protein>
    <recommendedName>
        <fullName evidence="7">Conglutin beta 3</fullName>
    </recommendedName>
    <allergenName evidence="6">Lup an 1</allergenName>
</protein>
<dbReference type="EMBL" id="HQ670411">
    <property type="protein sequence ID" value="AEB33714.1"/>
    <property type="molecule type" value="mRNA"/>
</dbReference>
<dbReference type="SMR" id="F5B8W1"/>
<dbReference type="Allergome" id="4015">
    <property type="allergen name" value="Lup an 1"/>
</dbReference>
<dbReference type="GlyCosmos" id="F5B8W1">
    <property type="glycosylation" value="2 sites, No reported glycans"/>
</dbReference>
<dbReference type="GO" id="GO:0045735">
    <property type="term" value="F:nutrient reservoir activity"/>
    <property type="evidence" value="ECO:0007669"/>
    <property type="project" value="UniProtKB-KW"/>
</dbReference>
<dbReference type="CDD" id="cd02245">
    <property type="entry name" value="cupin_7S_vicilin-like_C"/>
    <property type="match status" value="1"/>
</dbReference>
<dbReference type="CDD" id="cd02244">
    <property type="entry name" value="cupin_7S_vicilin-like_N"/>
    <property type="match status" value="1"/>
</dbReference>
<dbReference type="Gene3D" id="2.60.120.10">
    <property type="entry name" value="Jelly Rolls"/>
    <property type="match status" value="2"/>
</dbReference>
<dbReference type="InterPro" id="IPR006045">
    <property type="entry name" value="Cupin_1"/>
</dbReference>
<dbReference type="InterPro" id="IPR014710">
    <property type="entry name" value="RmlC-like_jellyroll"/>
</dbReference>
<dbReference type="InterPro" id="IPR011051">
    <property type="entry name" value="RmlC_Cupin_sf"/>
</dbReference>
<dbReference type="InterPro" id="IPR050253">
    <property type="entry name" value="Seed_Storage-Functional"/>
</dbReference>
<dbReference type="PANTHER" id="PTHR31189">
    <property type="entry name" value="OS03G0336100 PROTEIN-RELATED"/>
    <property type="match status" value="1"/>
</dbReference>
<dbReference type="PANTHER" id="PTHR31189:SF41">
    <property type="entry name" value="VICILIN C72"/>
    <property type="match status" value="1"/>
</dbReference>
<dbReference type="Pfam" id="PF00190">
    <property type="entry name" value="Cupin_1"/>
    <property type="match status" value="2"/>
</dbReference>
<dbReference type="SMART" id="SM00835">
    <property type="entry name" value="Cupin_1"/>
    <property type="match status" value="2"/>
</dbReference>
<dbReference type="SUPFAM" id="SSF51182">
    <property type="entry name" value="RmlC-like cupins"/>
    <property type="match status" value="1"/>
</dbReference>
<proteinExistence type="evidence at protein level"/>